<organism>
    <name type="scientific">Homo sapiens</name>
    <name type="common">Human</name>
    <dbReference type="NCBI Taxonomy" id="9606"/>
    <lineage>
        <taxon>Eukaryota</taxon>
        <taxon>Metazoa</taxon>
        <taxon>Chordata</taxon>
        <taxon>Craniata</taxon>
        <taxon>Vertebrata</taxon>
        <taxon>Euteleostomi</taxon>
        <taxon>Mammalia</taxon>
        <taxon>Eutheria</taxon>
        <taxon>Euarchontoglires</taxon>
        <taxon>Primates</taxon>
        <taxon>Haplorrhini</taxon>
        <taxon>Catarrhini</taxon>
        <taxon>Hominidae</taxon>
        <taxon>Homo</taxon>
    </lineage>
</organism>
<comment type="function">
    <text evidence="5">Component of the ESCRT-I complex, a regulator of vesicular trafficking process. Required for the sorting of endocytic ubiquitinated cargos into multivesicular bodies. May be involved in cell growth and differentiation.</text>
</comment>
<comment type="subunit">
    <text evidence="4 5 6 7">Component of the ESCRT-I complex (endosomal sorting complex required for transport I) which consists of TSG101, VPS28, a VPS37 protein (VPS37A to -D) and MVB12A or MVB12B in a 1:1:1:1 stoichiometry. Interacts with TSG101, VPS28 and HGS. Component of an ESCRT-I complex (endosomal sorting complex required for transport I) which consists of TSG101, VPS28, VPS37A and UBAP1 in a 1:1:1:1 stoichiometry.</text>
</comment>
<comment type="interaction">
    <interactant intactId="EBI-2850578">
        <id>Q8NEZ2</id>
    </interactant>
    <interactant intactId="EBI-946046">
        <id>P54252</id>
        <label>ATXN3</label>
    </interactant>
    <organismsDiffer>false</organismsDiffer>
    <experiments>3</experiments>
</comment>
<comment type="interaction">
    <interactant intactId="EBI-2850578">
        <id>Q8NEZ2</id>
    </interactant>
    <interactant intactId="EBI-10976677">
        <id>G5E9A7</id>
        <label>DMWD</label>
    </interactant>
    <organismsDiffer>false</organismsDiffer>
    <experiments>3</experiments>
</comment>
<comment type="interaction">
    <interactant intactId="EBI-2850578">
        <id>Q8NEZ2</id>
    </interactant>
    <interactant intactId="EBI-348399">
        <id>P22607</id>
        <label>FGFR3</label>
    </interactant>
    <organismsDiffer>false</organismsDiffer>
    <experiments>3</experiments>
</comment>
<comment type="interaction">
    <interactant intactId="EBI-2850578">
        <id>Q8NEZ2</id>
    </interactant>
    <interactant intactId="EBI-11110431">
        <id>Q8TB36</id>
        <label>GDAP1</label>
    </interactant>
    <organismsDiffer>false</organismsDiffer>
    <experiments>3</experiments>
</comment>
<comment type="interaction">
    <interactant intactId="EBI-2850578">
        <id>Q8NEZ2</id>
    </interactant>
    <interactant intactId="EBI-747754">
        <id>P28799</id>
        <label>GRN</label>
    </interactant>
    <organismsDiffer>false</organismsDiffer>
    <experiments>3</experiments>
</comment>
<comment type="interaction">
    <interactant intactId="EBI-2850578">
        <id>Q8NEZ2</id>
    </interactant>
    <interactant intactId="EBI-351506">
        <id>P06396</id>
        <label>GSN</label>
    </interactant>
    <organismsDiffer>false</organismsDiffer>
    <experiments>3</experiments>
</comment>
<comment type="interaction">
    <interactant intactId="EBI-2850578">
        <id>Q8NEZ2</id>
    </interactant>
    <interactant intactId="EBI-350145">
        <id>P01112</id>
        <label>HRAS</label>
    </interactant>
    <organismsDiffer>false</organismsDiffer>
    <experiments>3</experiments>
</comment>
<comment type="interaction">
    <interactant intactId="EBI-2850578">
        <id>Q8NEZ2</id>
    </interactant>
    <interactant intactId="EBI-517086">
        <id>O43464</id>
        <label>HTRA2</label>
    </interactant>
    <organismsDiffer>false</organismsDiffer>
    <experiments>3</experiments>
</comment>
<comment type="interaction">
    <interactant intactId="EBI-2850578">
        <id>Q8NEZ2</id>
    </interactant>
    <interactant intactId="EBI-466029">
        <id>P42858</id>
        <label>HTT</label>
    </interactant>
    <organismsDiffer>false</organismsDiffer>
    <experiments>6</experiments>
</comment>
<comment type="interaction">
    <interactant intactId="EBI-2850578">
        <id>Q8NEZ2</id>
    </interactant>
    <interactant intactId="EBI-1055254">
        <id>Q8WXH2</id>
        <label>JPH3</label>
    </interactant>
    <organismsDiffer>false</organismsDiffer>
    <experiments>3</experiments>
</comment>
<comment type="interaction">
    <interactant intactId="EBI-2850578">
        <id>Q8NEZ2</id>
    </interactant>
    <interactant intactId="EBI-10975473">
        <id>O60333-2</id>
        <label>KIF1B</label>
    </interactant>
    <organismsDiffer>false</organismsDiffer>
    <experiments>3</experiments>
</comment>
<comment type="interaction">
    <interactant intactId="EBI-2850578">
        <id>Q8NEZ2</id>
    </interactant>
    <interactant intactId="EBI-948266">
        <id>O14901</id>
        <label>KLF11</label>
    </interactant>
    <organismsDiffer>false</organismsDiffer>
    <experiments>3</experiments>
</comment>
<comment type="interaction">
    <interactant intactId="EBI-2850578">
        <id>Q8NEZ2</id>
    </interactant>
    <interactant intactId="EBI-1014472">
        <id>P35240</id>
        <label>NF2</label>
    </interactant>
    <organismsDiffer>false</organismsDiffer>
    <experiments>3</experiments>
</comment>
<comment type="interaction">
    <interactant intactId="EBI-2850578">
        <id>Q8NEZ2</id>
    </interactant>
    <interactant intactId="EBI-1014514">
        <id>P35240-4</id>
        <label>NF2</label>
    </interactant>
    <organismsDiffer>false</organismsDiffer>
    <experiments>3</experiments>
</comment>
<comment type="interaction">
    <interactant intactId="EBI-2850578">
        <id>Q8NEZ2</id>
    </interactant>
    <interactant intactId="EBI-2811583">
        <id>Q9BVL2</id>
        <label>NUP58</label>
    </interactant>
    <organismsDiffer>false</organismsDiffer>
    <experiments>3</experiments>
</comment>
<comment type="interaction">
    <interactant intactId="EBI-2850578">
        <id>Q8NEZ2</id>
    </interactant>
    <interactant intactId="EBI-749195">
        <id>P60891</id>
        <label>PRPS1</label>
    </interactant>
    <organismsDiffer>false</organismsDiffer>
    <experiments>3</experiments>
</comment>
<comment type="interaction">
    <interactant intactId="EBI-2850578">
        <id>Q8NEZ2</id>
    </interactant>
    <interactant intactId="EBI-396669">
        <id>Q9Y3C5</id>
        <label>RNF11</label>
    </interactant>
    <organismsDiffer>false</organismsDiffer>
    <experiments>3</experiments>
</comment>
<comment type="interaction">
    <interactant intactId="EBI-2850578">
        <id>Q8NEZ2</id>
    </interactant>
    <interactant intactId="EBI-5235340">
        <id>Q7Z699</id>
        <label>SPRED1</label>
    </interactant>
    <organismsDiffer>false</organismsDiffer>
    <experiments>3</experiments>
</comment>
<comment type="interaction">
    <interactant intactId="EBI-2850578">
        <id>Q8NEZ2</id>
    </interactant>
    <interactant intactId="EBI-372899">
        <id>Q13148</id>
        <label>TARDBP</label>
    </interactant>
    <organismsDiffer>false</organismsDiffer>
    <experiments>3</experiments>
</comment>
<comment type="interaction">
    <interactant intactId="EBI-2850578">
        <id>Q8NEZ2</id>
    </interactant>
    <interactant intactId="EBI-12806590">
        <id>Q86WV8</id>
        <label>TSC1</label>
    </interactant>
    <organismsDiffer>false</organismsDiffer>
    <experiments>3</experiments>
</comment>
<comment type="interaction">
    <interactant intactId="EBI-2850578">
        <id>Q8NEZ2</id>
    </interactant>
    <interactant intactId="EBI-346882">
        <id>Q99816</id>
        <label>TSG101</label>
    </interactant>
    <organismsDiffer>false</organismsDiffer>
    <experiments>9</experiments>
</comment>
<comment type="interaction">
    <interactant intactId="EBI-2850578">
        <id>Q8NEZ2</id>
    </interactant>
    <interactant intactId="EBI-720609">
        <id>O76024</id>
        <label>WFS1</label>
    </interactant>
    <organismsDiffer>false</organismsDiffer>
    <experiments>3</experiments>
</comment>
<comment type="interaction">
    <interactant intactId="EBI-10270911">
        <id>Q8NEZ2-2</id>
    </interactant>
    <interactant intactId="EBI-10976677">
        <id>G5E9A7</id>
        <label>DMWD</label>
    </interactant>
    <organismsDiffer>false</organismsDiffer>
    <experiments>3</experiments>
</comment>
<comment type="interaction">
    <interactant intactId="EBI-10270911">
        <id>Q8NEZ2-2</id>
    </interactant>
    <interactant intactId="EBI-747754">
        <id>P28799</id>
        <label>GRN</label>
    </interactant>
    <organismsDiffer>false</organismsDiffer>
    <experiments>3</experiments>
</comment>
<comment type="interaction">
    <interactant intactId="EBI-10270911">
        <id>Q8NEZ2-2</id>
    </interactant>
    <interactant intactId="EBI-5235340">
        <id>Q7Z699</id>
        <label>SPRED1</label>
    </interactant>
    <organismsDiffer>false</organismsDiffer>
    <experiments>3</experiments>
</comment>
<comment type="interaction">
    <interactant intactId="EBI-10270911">
        <id>Q8NEZ2-2</id>
    </interactant>
    <interactant intactId="EBI-372899">
        <id>Q13148</id>
        <label>TARDBP</label>
    </interactant>
    <organismsDiffer>false</organismsDiffer>
    <experiments>3</experiments>
</comment>
<comment type="interaction">
    <interactant intactId="EBI-10270911">
        <id>Q8NEZ2-2</id>
    </interactant>
    <interactant intactId="EBI-5235829">
        <id>Q8IWZ5</id>
        <label>TRIM42</label>
    </interactant>
    <organismsDiffer>false</organismsDiffer>
    <experiments>3</experiments>
</comment>
<comment type="interaction">
    <interactant intactId="EBI-10270911">
        <id>Q8NEZ2-2</id>
    </interactant>
    <interactant intactId="EBI-346882">
        <id>Q99816</id>
        <label>TSG101</label>
    </interactant>
    <organismsDiffer>false</organismsDiffer>
    <experiments>5</experiments>
</comment>
<comment type="subcellular location">
    <subcellularLocation>
        <location>Late endosome membrane</location>
        <topology>Peripheral membrane protein</topology>
    </subcellularLocation>
    <subcellularLocation>
        <location>Nucleus</location>
    </subcellularLocation>
</comment>
<comment type="alternative products">
    <event type="alternative splicing"/>
    <isoform>
        <id>Q8NEZ2-1</id>
        <name>1</name>
        <sequence type="displayed"/>
    </isoform>
    <isoform>
        <id>Q8NEZ2-2</id>
        <name>2</name>
        <name>beta</name>
        <sequence type="described" ref="VSP_025367"/>
    </isoform>
    <isoform>
        <id>Q8NEZ2-3</id>
        <name>3</name>
        <sequence type="described" ref="VSP_025368 VSP_025369"/>
    </isoform>
</comment>
<comment type="tissue specificity">
    <text evidence="3 8">Widely expressed. Examined tissues include heart, brain, placenta, liver, skeletal muscle, kidney and pancreas. More abundant in liver. Strongly decreased or undetected in hepatomas.</text>
</comment>
<comment type="disease" evidence="8">
    <disease id="DI-03607">
        <name>Spastic paraplegia 53, autosomal recessive</name>
        <acronym>SPG53</acronym>
        <description>A form of spastic paraplegia, a neurodegenerative disorder characterized by a slow, gradual, progressive weakness and spasticity of the lower limbs. Rate of progression and the severity of symptoms are quite variable. Initial symptoms may include difficulty with balance, weakness and stiffness in the legs, muscle spasms, and dragging the toes when walking. Complicated forms are recognized by additional variable features including spastic quadriparesis, seizures, dementia, amyotrophy, extrapyramidal disturbance, cerebral or cerebellar atrophy, optic atrophy, and peripheral neuropathy, as well as by extra neurological manifestations. SPG53 is characterized by pronounced early onset spastic paraparesis of upper and lower limbs, mild intellectual disability, kyphosis, pectus carinatum and hypertrichosis.</description>
        <dbReference type="MIM" id="614898"/>
    </disease>
    <text>The disease is caused by variants affecting the gene represented in this entry.</text>
</comment>
<comment type="similarity">
    <text evidence="11">Belongs to the VPS37 family.</text>
</comment>
<comment type="sequence caution" evidence="11">
    <conflict type="erroneous initiation">
        <sequence resource="EMBL-CDS" id="AAH22363"/>
    </conflict>
    <text>Truncated N-terminus.</text>
</comment>
<reference key="1">
    <citation type="journal article" date="2003" name="Biochem. Biophys. Res. Commun.">
        <title>HCRP1, a novel gene that is downregulated in hepatocellular carcinoma, encodes a growth-inhibitory protein.</title>
        <authorList>
            <person name="Xu Z."/>
            <person name="Liang L."/>
            <person name="Wang H."/>
            <person name="Li T."/>
            <person name="Zhao M."/>
        </authorList>
    </citation>
    <scope>NUCLEOTIDE SEQUENCE [MRNA] (ISOFORMS 1 AND 2)</scope>
    <scope>SUBCELLULAR LOCATION</scope>
    <scope>TISSUE SPECIFICITY</scope>
    <source>
        <tissue>Liver</tissue>
    </source>
</reference>
<reference key="2">
    <citation type="journal article" date="2004" name="Nat. Genet.">
        <title>Complete sequencing and characterization of 21,243 full-length human cDNAs.</title>
        <authorList>
            <person name="Ota T."/>
            <person name="Suzuki Y."/>
            <person name="Nishikawa T."/>
            <person name="Otsuki T."/>
            <person name="Sugiyama T."/>
            <person name="Irie R."/>
            <person name="Wakamatsu A."/>
            <person name="Hayashi K."/>
            <person name="Sato H."/>
            <person name="Nagai K."/>
            <person name="Kimura K."/>
            <person name="Makita H."/>
            <person name="Sekine M."/>
            <person name="Obayashi M."/>
            <person name="Nishi T."/>
            <person name="Shibahara T."/>
            <person name="Tanaka T."/>
            <person name="Ishii S."/>
            <person name="Yamamoto J."/>
            <person name="Saito K."/>
            <person name="Kawai Y."/>
            <person name="Isono Y."/>
            <person name="Nakamura Y."/>
            <person name="Nagahari K."/>
            <person name="Murakami K."/>
            <person name="Yasuda T."/>
            <person name="Iwayanagi T."/>
            <person name="Wagatsuma M."/>
            <person name="Shiratori A."/>
            <person name="Sudo H."/>
            <person name="Hosoiri T."/>
            <person name="Kaku Y."/>
            <person name="Kodaira H."/>
            <person name="Kondo H."/>
            <person name="Sugawara M."/>
            <person name="Takahashi M."/>
            <person name="Kanda K."/>
            <person name="Yokoi T."/>
            <person name="Furuya T."/>
            <person name="Kikkawa E."/>
            <person name="Omura Y."/>
            <person name="Abe K."/>
            <person name="Kamihara K."/>
            <person name="Katsuta N."/>
            <person name="Sato K."/>
            <person name="Tanikawa M."/>
            <person name="Yamazaki M."/>
            <person name="Ninomiya K."/>
            <person name="Ishibashi T."/>
            <person name="Yamashita H."/>
            <person name="Murakawa K."/>
            <person name="Fujimori K."/>
            <person name="Tanai H."/>
            <person name="Kimata M."/>
            <person name="Watanabe M."/>
            <person name="Hiraoka S."/>
            <person name="Chiba Y."/>
            <person name="Ishida S."/>
            <person name="Ono Y."/>
            <person name="Takiguchi S."/>
            <person name="Watanabe S."/>
            <person name="Yosida M."/>
            <person name="Hotuta T."/>
            <person name="Kusano J."/>
            <person name="Kanehori K."/>
            <person name="Takahashi-Fujii A."/>
            <person name="Hara H."/>
            <person name="Tanase T.-O."/>
            <person name="Nomura Y."/>
            <person name="Togiya S."/>
            <person name="Komai F."/>
            <person name="Hara R."/>
            <person name="Takeuchi K."/>
            <person name="Arita M."/>
            <person name="Imose N."/>
            <person name="Musashino K."/>
            <person name="Yuuki H."/>
            <person name="Oshima A."/>
            <person name="Sasaki N."/>
            <person name="Aotsuka S."/>
            <person name="Yoshikawa Y."/>
            <person name="Matsunawa H."/>
            <person name="Ichihara T."/>
            <person name="Shiohata N."/>
            <person name="Sano S."/>
            <person name="Moriya S."/>
            <person name="Momiyama H."/>
            <person name="Satoh N."/>
            <person name="Takami S."/>
            <person name="Terashima Y."/>
            <person name="Suzuki O."/>
            <person name="Nakagawa S."/>
            <person name="Senoh A."/>
            <person name="Mizoguchi H."/>
            <person name="Goto Y."/>
            <person name="Shimizu F."/>
            <person name="Wakebe H."/>
            <person name="Hishigaki H."/>
            <person name="Watanabe T."/>
            <person name="Sugiyama A."/>
            <person name="Takemoto M."/>
            <person name="Kawakami B."/>
            <person name="Yamazaki M."/>
            <person name="Watanabe K."/>
            <person name="Kumagai A."/>
            <person name="Itakura S."/>
            <person name="Fukuzumi Y."/>
            <person name="Fujimori Y."/>
            <person name="Komiyama M."/>
            <person name="Tashiro H."/>
            <person name="Tanigami A."/>
            <person name="Fujiwara T."/>
            <person name="Ono T."/>
            <person name="Yamada K."/>
            <person name="Fujii Y."/>
            <person name="Ozaki K."/>
            <person name="Hirao M."/>
            <person name="Ohmori Y."/>
            <person name="Kawabata A."/>
            <person name="Hikiji T."/>
            <person name="Kobatake N."/>
            <person name="Inagaki H."/>
            <person name="Ikema Y."/>
            <person name="Okamoto S."/>
            <person name="Okitani R."/>
            <person name="Kawakami T."/>
            <person name="Noguchi S."/>
            <person name="Itoh T."/>
            <person name="Shigeta K."/>
            <person name="Senba T."/>
            <person name="Matsumura K."/>
            <person name="Nakajima Y."/>
            <person name="Mizuno T."/>
            <person name="Morinaga M."/>
            <person name="Sasaki M."/>
            <person name="Togashi T."/>
            <person name="Oyama M."/>
            <person name="Hata H."/>
            <person name="Watanabe M."/>
            <person name="Komatsu T."/>
            <person name="Mizushima-Sugano J."/>
            <person name="Satoh T."/>
            <person name="Shirai Y."/>
            <person name="Takahashi Y."/>
            <person name="Nakagawa K."/>
            <person name="Okumura K."/>
            <person name="Nagase T."/>
            <person name="Nomura N."/>
            <person name="Kikuchi H."/>
            <person name="Masuho Y."/>
            <person name="Yamashita R."/>
            <person name="Nakai K."/>
            <person name="Yada T."/>
            <person name="Nakamura Y."/>
            <person name="Ohara O."/>
            <person name="Isogai T."/>
            <person name="Sugano S."/>
        </authorList>
    </citation>
    <scope>NUCLEOTIDE SEQUENCE [LARGE SCALE MRNA] (ISOFORM 1)</scope>
    <source>
        <tissue>Synovium</tissue>
    </source>
</reference>
<reference key="3">
    <citation type="journal article" date="2007" name="BMC Genomics">
        <title>The full-ORF clone resource of the German cDNA consortium.</title>
        <authorList>
            <person name="Bechtel S."/>
            <person name="Rosenfelder H."/>
            <person name="Duda A."/>
            <person name="Schmidt C.P."/>
            <person name="Ernst U."/>
            <person name="Wellenreuther R."/>
            <person name="Mehrle A."/>
            <person name="Schuster C."/>
            <person name="Bahr A."/>
            <person name="Bloecker H."/>
            <person name="Heubner D."/>
            <person name="Hoerlein A."/>
            <person name="Michel G."/>
            <person name="Wedler H."/>
            <person name="Koehrer K."/>
            <person name="Ottenwaelder B."/>
            <person name="Poustka A."/>
            <person name="Wiemann S."/>
            <person name="Schupp I."/>
        </authorList>
    </citation>
    <scope>NUCLEOTIDE SEQUENCE [LARGE SCALE MRNA] (ISOFORM 3)</scope>
    <source>
        <tissue>Melanoma</tissue>
    </source>
</reference>
<reference key="4">
    <citation type="journal article" date="2004" name="Genome Res.">
        <title>The status, quality, and expansion of the NIH full-length cDNA project: the Mammalian Gene Collection (MGC).</title>
        <authorList>
            <consortium name="The MGC Project Team"/>
        </authorList>
    </citation>
    <scope>NUCLEOTIDE SEQUENCE [LARGE SCALE MRNA] (ISOFORM 1)</scope>
    <source>
        <tissue>Brain</tissue>
        <tissue>Prostate</tissue>
    </source>
</reference>
<reference key="5">
    <citation type="journal article" date="2004" name="J. Biol. Chem.">
        <title>The human endosomal sorting complex required for transport (ESCRT-I) and its role in HIV-1 budding.</title>
        <authorList>
            <person name="Stuchell M.D."/>
            <person name="Garrus J.E."/>
            <person name="Mueller B."/>
            <person name="Stray K.M."/>
            <person name="Ghaffarian S."/>
            <person name="McKinnon R."/>
            <person name="Kraeusslich H.-G."/>
            <person name="Morham S.G."/>
            <person name="Sundquist W.I."/>
        </authorList>
    </citation>
    <scope>INTERACTION WITH TSG101</scope>
</reference>
<reference key="6">
    <citation type="journal article" date="2004" name="Mol. Biol. Cell">
        <title>The growth-regulatory protein HCRP1/hVps37A is a subunit of mammalian ESCRT-I and mediates receptor down-regulation.</title>
        <authorList>
            <person name="Bache K.G."/>
            <person name="Slagsvold T."/>
            <person name="Cabezas A."/>
            <person name="Rosendal K.R."/>
            <person name="Raiborg C."/>
            <person name="Stenmark H."/>
        </authorList>
    </citation>
    <scope>FUNCTION</scope>
    <scope>SUBCELLULAR LOCATION</scope>
    <scope>INTERACTION WITH TSG101; VPS28 AND HGS</scope>
</reference>
<reference key="7">
    <citation type="journal article" date="2007" name="Cell Host Microbe">
        <title>Identification of human MVB12 proteins as ESCRT-I subunits that function in HIV budding.</title>
        <authorList>
            <person name="Morita E."/>
            <person name="Sandrin V."/>
            <person name="Alam S.L."/>
            <person name="Eckert D.M."/>
            <person name="Gygi S.P."/>
            <person name="Sundquist W.I."/>
        </authorList>
    </citation>
    <scope>INTERACTION WITH TSG101</scope>
    <scope>IDENTIFICATION BY MASS SPECTROMETRY</scope>
</reference>
<reference key="8">
    <citation type="journal article" date="2008" name="Proc. Natl. Acad. Sci. U.S.A.">
        <title>A quantitative atlas of mitotic phosphorylation.</title>
        <authorList>
            <person name="Dephoure N."/>
            <person name="Zhou C."/>
            <person name="Villen J."/>
            <person name="Beausoleil S.A."/>
            <person name="Bakalarski C.E."/>
            <person name="Elledge S.J."/>
            <person name="Gygi S.P."/>
        </authorList>
    </citation>
    <scope>PHOSPHORYLATION [LARGE SCALE ANALYSIS] AT SER-18</scope>
    <scope>IDENTIFICATION BY MASS SPECTROMETRY [LARGE SCALE ANALYSIS]</scope>
    <source>
        <tissue>Cervix carcinoma</tissue>
    </source>
</reference>
<reference key="9">
    <citation type="journal article" date="2009" name="Anal. Chem.">
        <title>Lys-N and trypsin cover complementary parts of the phosphoproteome in a refined SCX-based approach.</title>
        <authorList>
            <person name="Gauci S."/>
            <person name="Helbig A.O."/>
            <person name="Slijper M."/>
            <person name="Krijgsveld J."/>
            <person name="Heck A.J."/>
            <person name="Mohammed S."/>
        </authorList>
    </citation>
    <scope>IDENTIFICATION BY MASS SPECTROMETRY [LARGE SCALE ANALYSIS]</scope>
</reference>
<reference key="10">
    <citation type="journal article" date="2011" name="BMC Syst. Biol.">
        <title>Initial characterization of the human central proteome.</title>
        <authorList>
            <person name="Burkard T.R."/>
            <person name="Planyavsky M."/>
            <person name="Kaupe I."/>
            <person name="Breitwieser F.P."/>
            <person name="Buerckstuemmer T."/>
            <person name="Bennett K.L."/>
            <person name="Superti-Furga G."/>
            <person name="Colinge J."/>
        </authorList>
    </citation>
    <scope>IDENTIFICATION BY MASS SPECTROMETRY [LARGE SCALE ANALYSIS]</scope>
</reference>
<reference key="11">
    <citation type="journal article" date="2011" name="Curr. Biol.">
        <title>UBAP1 is a component of an endosome-specific ESCRT-I complex that is essential for MVB sorting.</title>
        <authorList>
            <person name="Stefani F."/>
            <person name="Zhang L."/>
            <person name="Taylor S."/>
            <person name="Donovan J."/>
            <person name="Rollinson S."/>
            <person name="Doyotte A."/>
            <person name="Brownhill K."/>
            <person name="Bennion J."/>
            <person name="Pickering-Brown S."/>
            <person name="Woodman P."/>
        </authorList>
    </citation>
    <scope>IDENTIFICATION IN AN ESCRT-I COMPLEX WITH UBAP1</scope>
    <scope>SUBUNIT</scope>
</reference>
<reference key="12">
    <citation type="journal article" date="2012" name="J. Med. Genet.">
        <title>A founder mutation in Vps37A causes autosomal recessive complex hereditary spastic paraparesis.</title>
        <authorList>
            <person name="Zivony-Elboum Y."/>
            <person name="Westbroek W."/>
            <person name="Kfir N."/>
            <person name="Savitzki D."/>
            <person name="Shoval Y."/>
            <person name="Bloom A."/>
            <person name="Rod R."/>
            <person name="Khayat M."/>
            <person name="Gross B."/>
            <person name="Samri W."/>
            <person name="Cohen H."/>
            <person name="Sonkin V."/>
            <person name="Freidman T."/>
            <person name="Geiger D."/>
            <person name="Fattal-Valevski A."/>
            <person name="Anikster Y."/>
            <person name="Waters A.M."/>
            <person name="Kleta R."/>
            <person name="Falik-Zaccai T.C."/>
        </authorList>
    </citation>
    <scope>TISSUE SPECIFICITY</scope>
    <scope>VARIANT SPG53 ASN-382</scope>
    <scope>CHARACTERIZATION OF VARIANT SPG53 ASN-382</scope>
</reference>
<reference key="13">
    <citation type="journal article" date="2013" name="J. Proteome Res.">
        <title>Toward a comprehensive characterization of a human cancer cell phosphoproteome.</title>
        <authorList>
            <person name="Zhou H."/>
            <person name="Di Palma S."/>
            <person name="Preisinger C."/>
            <person name="Peng M."/>
            <person name="Polat A.N."/>
            <person name="Heck A.J."/>
            <person name="Mohammed S."/>
        </authorList>
    </citation>
    <scope>PHOSPHORYLATION [LARGE SCALE ANALYSIS] AT SER-18</scope>
    <scope>IDENTIFICATION BY MASS SPECTROMETRY [LARGE SCALE ANALYSIS]</scope>
    <source>
        <tissue>Cervix carcinoma</tissue>
        <tissue>Erythroleukemia</tissue>
    </source>
</reference>
<reference key="14">
    <citation type="journal article" date="2014" name="J. Proteomics">
        <title>An enzyme assisted RP-RPLC approach for in-depth analysis of human liver phosphoproteome.</title>
        <authorList>
            <person name="Bian Y."/>
            <person name="Song C."/>
            <person name="Cheng K."/>
            <person name="Dong M."/>
            <person name="Wang F."/>
            <person name="Huang J."/>
            <person name="Sun D."/>
            <person name="Wang L."/>
            <person name="Ye M."/>
            <person name="Zou H."/>
        </authorList>
    </citation>
    <scope>IDENTIFICATION BY MASS SPECTROMETRY [LARGE SCALE ANALYSIS]</scope>
    <source>
        <tissue>Liver</tissue>
    </source>
</reference>
<sequence length="397" mass="44314">MSWLFPLTKSASSSAAGSPGGLTSLQQQKQRLIESLRNSHSSIAEIQKDVEYRLPFTINNLTININILLPPQFPQEKPVISVYPPIRHHLMDKQGVYVTSPLVNNFTMHSDLGKIIQSLLDEFWKNPPVLAPTSTAFPYLYSNPSGMSPYASQGFPFLPPYPPQEANRSITSLSVADTVSSSTTSHTTAKPAAPSFGVLSNLPLPIPTVDASIPTSQNGFGYKMPDVPDAFPELSELSVSQLTDMNEQEEVLLEQFLTLPQLKQIITDKDDLVKSIEELARKNLLLEPSLEAKRQTVLDKYELLTQMKSTFEKKMQRQHELSESCSASALQARLKVAAHEAEEESDNIAEDFLEGKMEIDDFLSSFMEKRTICHCRRAKEEKLQQAIAMHSQFHAPL</sequence>
<feature type="chain" id="PRO_0000287198" description="Vacuolar protein sorting-associated protein 37A">
    <location>
        <begin position="1"/>
        <end position="397"/>
    </location>
</feature>
<feature type="domain" description="VPS37 C-terminal" evidence="1">
    <location>
        <begin position="308"/>
        <end position="397"/>
    </location>
</feature>
<feature type="region of interest" description="Disordered" evidence="2">
    <location>
        <begin position="1"/>
        <end position="22"/>
    </location>
</feature>
<feature type="modified residue" description="Phosphoserine" evidence="12 13">
    <location>
        <position position="18"/>
    </location>
</feature>
<feature type="splice variant" id="VSP_025367" description="In isoform 2." evidence="9">
    <original>SIAEIQKDVEYRLPFTINNLTININI</original>
    <variation>R</variation>
    <location>
        <begin position="42"/>
        <end position="67"/>
    </location>
</feature>
<feature type="splice variant" id="VSP_025368" description="In isoform 3." evidence="10">
    <original>LYSNPSGMSPYASQGFPFLPPYPPQEANRSITSLSVADTVSSSTTS</original>
    <variation>QLEIRWHHPHCLEISLARSSNSLGFSISSSISSTRSKQEYHFFICC</variation>
    <location>
        <begin position="140"/>
        <end position="185"/>
    </location>
</feature>
<feature type="splice variant" id="VSP_025369" description="In isoform 3." evidence="10">
    <location>
        <begin position="186"/>
        <end position="397"/>
    </location>
</feature>
<feature type="sequence variant" id="VAR_032287" description="In dbSNP:rs17502618.">
    <original>I</original>
    <variation>F</variation>
    <location>
        <position position="206"/>
    </location>
</feature>
<feature type="sequence variant" id="VAR_032288" description="In dbSNP:rs17687375.">
    <original>I</original>
    <variation>V</variation>
    <location>
        <position position="213"/>
    </location>
</feature>
<feature type="sequence variant" id="VAR_068424" description="In SPG53; found in patients with complex hereditary spastic paraparesis; hypomorphic mutation; does not affect interaction with TSG101 and VPS28; dbSNP:rs211694394." evidence="8">
    <original>K</original>
    <variation>N</variation>
    <location>
        <position position="382"/>
    </location>
</feature>
<feature type="sequence conflict" description="In Ref. 2; BAB71381." evidence="11" ref="2">
    <original>K</original>
    <variation>R</variation>
    <location>
        <position position="313"/>
    </location>
</feature>
<feature type="sequence conflict" description="In Ref. 4; AAH67754." evidence="11" ref="4">
    <original>S</original>
    <variation>I</variation>
    <location>
        <position position="324"/>
    </location>
</feature>
<feature type="helix" evidence="14">
    <location>
        <begin position="24"/>
        <end position="39"/>
    </location>
</feature>
<feature type="strand" evidence="14">
    <location>
        <begin position="44"/>
        <end position="47"/>
    </location>
</feature>
<feature type="turn" evidence="14">
    <location>
        <begin position="48"/>
        <end position="50"/>
    </location>
</feature>
<feature type="strand" evidence="14">
    <location>
        <begin position="51"/>
        <end position="58"/>
    </location>
</feature>
<feature type="strand" evidence="14">
    <location>
        <begin position="61"/>
        <end position="68"/>
    </location>
</feature>
<feature type="turn" evidence="14">
    <location>
        <begin position="71"/>
        <end position="74"/>
    </location>
</feature>
<feature type="strand" evidence="14">
    <location>
        <begin position="79"/>
        <end position="84"/>
    </location>
</feature>
<feature type="strand" evidence="14">
    <location>
        <begin position="95"/>
        <end position="98"/>
    </location>
</feature>
<feature type="helix" evidence="14">
    <location>
        <begin position="101"/>
        <end position="104"/>
    </location>
</feature>
<feature type="helix" evidence="14">
    <location>
        <begin position="112"/>
        <end position="125"/>
    </location>
</feature>
<proteinExistence type="evidence at protein level"/>
<accession>Q8NEZ2</accession>
<accession>Q336D5</accession>
<accession>Q6NW27</accession>
<accession>Q8N3D7</accession>
<accession>Q8TBL7</accession>
<accession>Q96DL9</accession>
<evidence type="ECO:0000255" key="1">
    <source>
        <dbReference type="PROSITE-ProRule" id="PRU00646"/>
    </source>
</evidence>
<evidence type="ECO:0000256" key="2">
    <source>
        <dbReference type="SAM" id="MobiDB-lite"/>
    </source>
</evidence>
<evidence type="ECO:0000269" key="3">
    <source>
    </source>
</evidence>
<evidence type="ECO:0000269" key="4">
    <source>
    </source>
</evidence>
<evidence type="ECO:0000269" key="5">
    <source>
    </source>
</evidence>
<evidence type="ECO:0000269" key="6">
    <source>
    </source>
</evidence>
<evidence type="ECO:0000269" key="7">
    <source>
    </source>
</evidence>
<evidence type="ECO:0000269" key="8">
    <source>
    </source>
</evidence>
<evidence type="ECO:0000303" key="9">
    <source>
    </source>
</evidence>
<evidence type="ECO:0000303" key="10">
    <source>
    </source>
</evidence>
<evidence type="ECO:0000305" key="11"/>
<evidence type="ECO:0007744" key="12">
    <source>
    </source>
</evidence>
<evidence type="ECO:0007744" key="13">
    <source>
    </source>
</evidence>
<evidence type="ECO:0007829" key="14">
    <source>
        <dbReference type="PDB" id="8E22"/>
    </source>
</evidence>
<protein>
    <recommendedName>
        <fullName>Vacuolar protein sorting-associated protein 37A</fullName>
        <shortName>hVps37A</shortName>
    </recommendedName>
    <alternativeName>
        <fullName>ESCRT-I complex subunit VPS37A</fullName>
    </alternativeName>
    <alternativeName>
        <fullName>Hepatocellular carcinoma-related protein 1</fullName>
    </alternativeName>
</protein>
<keyword id="KW-0002">3D-structure</keyword>
<keyword id="KW-0025">Alternative splicing</keyword>
<keyword id="KW-0225">Disease variant</keyword>
<keyword id="KW-0967">Endosome</keyword>
<keyword id="KW-0890">Hereditary spastic paraplegia</keyword>
<keyword id="KW-0472">Membrane</keyword>
<keyword id="KW-0523">Neurodegeneration</keyword>
<keyword id="KW-0539">Nucleus</keyword>
<keyword id="KW-0597">Phosphoprotein</keyword>
<keyword id="KW-0653">Protein transport</keyword>
<keyword id="KW-1267">Proteomics identification</keyword>
<keyword id="KW-1185">Reference proteome</keyword>
<keyword id="KW-0813">Transport</keyword>
<dbReference type="EMBL" id="AY033079">
    <property type="protein sequence ID" value="AAK54349.1"/>
    <property type="molecule type" value="mRNA"/>
</dbReference>
<dbReference type="EMBL" id="AF547097">
    <property type="protein sequence ID" value="AAQ12067.1"/>
    <property type="molecule type" value="mRNA"/>
</dbReference>
<dbReference type="EMBL" id="AK057204">
    <property type="protein sequence ID" value="BAB71381.1"/>
    <property type="molecule type" value="mRNA"/>
</dbReference>
<dbReference type="EMBL" id="AL834189">
    <property type="protein sequence ID" value="CAD38883.1"/>
    <property type="molecule type" value="mRNA"/>
</dbReference>
<dbReference type="EMBL" id="BC022363">
    <property type="protein sequence ID" value="AAH22363.1"/>
    <property type="status" value="ALT_INIT"/>
    <property type="molecule type" value="mRNA"/>
</dbReference>
<dbReference type="EMBL" id="BC067754">
    <property type="protein sequence ID" value="AAH67754.1"/>
    <property type="molecule type" value="mRNA"/>
</dbReference>
<dbReference type="CCDS" id="CCDS47811.1">
    <molecule id="Q8NEZ2-2"/>
</dbReference>
<dbReference type="CCDS" id="CCDS6001.1">
    <molecule id="Q8NEZ2-1"/>
</dbReference>
<dbReference type="RefSeq" id="NP_001138624.1">
    <molecule id="Q8NEZ2-2"/>
    <property type="nucleotide sequence ID" value="NM_001145152.2"/>
</dbReference>
<dbReference type="RefSeq" id="NP_001350102.1">
    <molecule id="Q8NEZ2-1"/>
    <property type="nucleotide sequence ID" value="NM_001363173.2"/>
</dbReference>
<dbReference type="RefSeq" id="NP_689628.2">
    <molecule id="Q8NEZ2-1"/>
    <property type="nucleotide sequence ID" value="NM_152415.3"/>
</dbReference>
<dbReference type="RefSeq" id="XP_016868510.1">
    <molecule id="Q8NEZ2-1"/>
    <property type="nucleotide sequence ID" value="XM_017013021.3"/>
</dbReference>
<dbReference type="RefSeq" id="XP_016868511.1">
    <property type="nucleotide sequence ID" value="XM_017013022.1"/>
</dbReference>
<dbReference type="RefSeq" id="XP_016868515.1">
    <property type="nucleotide sequence ID" value="XM_017013026.1"/>
</dbReference>
<dbReference type="RefSeq" id="XP_054215722.1">
    <molecule id="Q8NEZ2-1"/>
    <property type="nucleotide sequence ID" value="XM_054359747.1"/>
</dbReference>
<dbReference type="PDB" id="8E22">
    <property type="method" value="NMR"/>
    <property type="chains" value="X=21-148"/>
</dbReference>
<dbReference type="PDBsum" id="8E22"/>
<dbReference type="SMR" id="Q8NEZ2"/>
<dbReference type="BioGRID" id="126479">
    <property type="interactions" value="38"/>
</dbReference>
<dbReference type="ComplexPortal" id="CPX-7146">
    <property type="entry name" value="ESCRT-I complex, VPS37A-MVB12B variant"/>
</dbReference>
<dbReference type="ComplexPortal" id="CPX-7162">
    <property type="entry name" value="ESCRT-I complex, VPS37A-MVB12A variant"/>
</dbReference>
<dbReference type="ComplexPortal" id="CPX-7181">
    <property type="entry name" value="ESCRT-I complex, VPS37A-UBAP1 variant"/>
</dbReference>
<dbReference type="CORUM" id="Q8NEZ2"/>
<dbReference type="FunCoup" id="Q8NEZ2">
    <property type="interactions" value="2601"/>
</dbReference>
<dbReference type="IntAct" id="Q8NEZ2">
    <property type="interactions" value="39"/>
</dbReference>
<dbReference type="MINT" id="Q8NEZ2"/>
<dbReference type="STRING" id="9606.ENSP00000318629"/>
<dbReference type="GlyCosmos" id="Q8NEZ2">
    <property type="glycosylation" value="10 sites, 2 glycans"/>
</dbReference>
<dbReference type="GlyGen" id="Q8NEZ2">
    <property type="glycosylation" value="11 sites, 2 O-linked glycans (11 sites)"/>
</dbReference>
<dbReference type="iPTMnet" id="Q8NEZ2"/>
<dbReference type="PhosphoSitePlus" id="Q8NEZ2"/>
<dbReference type="BioMuta" id="VPS37A"/>
<dbReference type="DMDM" id="74715446"/>
<dbReference type="jPOST" id="Q8NEZ2"/>
<dbReference type="MassIVE" id="Q8NEZ2"/>
<dbReference type="PaxDb" id="9606-ENSP00000318629"/>
<dbReference type="PeptideAtlas" id="Q8NEZ2"/>
<dbReference type="ProteomicsDB" id="73247">
    <molecule id="Q8NEZ2-1"/>
</dbReference>
<dbReference type="ProteomicsDB" id="73248">
    <molecule id="Q8NEZ2-2"/>
</dbReference>
<dbReference type="ProteomicsDB" id="73249">
    <molecule id="Q8NEZ2-3"/>
</dbReference>
<dbReference type="Pumba" id="Q8NEZ2"/>
<dbReference type="Antibodypedia" id="22259">
    <property type="antibodies" value="151 antibodies from 24 providers"/>
</dbReference>
<dbReference type="DNASU" id="137492"/>
<dbReference type="Ensembl" id="ENST00000324849.9">
    <molecule id="Q8NEZ2-1"/>
    <property type="protein sequence ID" value="ENSP00000318629.4"/>
    <property type="gene ID" value="ENSG00000155975.10"/>
</dbReference>
<dbReference type="Ensembl" id="ENST00000425020.6">
    <molecule id="Q8NEZ2-3"/>
    <property type="protein sequence ID" value="ENSP00000412824.2"/>
    <property type="gene ID" value="ENSG00000155975.10"/>
</dbReference>
<dbReference type="Ensembl" id="ENST00000521829.5">
    <molecule id="Q8NEZ2-2"/>
    <property type="protein sequence ID" value="ENSP00000429680.1"/>
    <property type="gene ID" value="ENSG00000155975.10"/>
</dbReference>
<dbReference type="GeneID" id="137492"/>
<dbReference type="KEGG" id="hsa:137492"/>
<dbReference type="MANE-Select" id="ENST00000324849.9">
    <property type="protein sequence ID" value="ENSP00000318629.4"/>
    <property type="RefSeq nucleotide sequence ID" value="NM_152415.3"/>
    <property type="RefSeq protein sequence ID" value="NP_689628.2"/>
</dbReference>
<dbReference type="UCSC" id="uc003wxj.4">
    <molecule id="Q8NEZ2-1"/>
    <property type="organism name" value="human"/>
</dbReference>
<dbReference type="AGR" id="HGNC:24928"/>
<dbReference type="CTD" id="137492"/>
<dbReference type="DisGeNET" id="137492"/>
<dbReference type="GeneCards" id="VPS37A"/>
<dbReference type="HGNC" id="HGNC:24928">
    <property type="gene designation" value="VPS37A"/>
</dbReference>
<dbReference type="HPA" id="ENSG00000155975">
    <property type="expression patterns" value="Low tissue specificity"/>
</dbReference>
<dbReference type="MalaCards" id="VPS37A"/>
<dbReference type="MIM" id="609927">
    <property type="type" value="gene"/>
</dbReference>
<dbReference type="MIM" id="614898">
    <property type="type" value="phenotype"/>
</dbReference>
<dbReference type="neXtProt" id="NX_Q8NEZ2"/>
<dbReference type="OpenTargets" id="ENSG00000155975"/>
<dbReference type="Orphanet" id="319199">
    <property type="disease" value="Autosomal recessive spastic paraplegia type 53"/>
</dbReference>
<dbReference type="PharmGKB" id="PA142670615"/>
<dbReference type="VEuPathDB" id="HostDB:ENSG00000155975"/>
<dbReference type="eggNOG" id="KOG3270">
    <property type="taxonomic scope" value="Eukaryota"/>
</dbReference>
<dbReference type="GeneTree" id="ENSGT00950000183012"/>
<dbReference type="HOGENOM" id="CLU_062319_0_0_1"/>
<dbReference type="InParanoid" id="Q8NEZ2"/>
<dbReference type="OMA" id="HPWCNEH"/>
<dbReference type="OrthoDB" id="10260857at2759"/>
<dbReference type="PAN-GO" id="Q8NEZ2">
    <property type="GO annotations" value="4 GO annotations based on evolutionary models"/>
</dbReference>
<dbReference type="PhylomeDB" id="Q8NEZ2"/>
<dbReference type="TreeFam" id="TF332146"/>
<dbReference type="PathwayCommons" id="Q8NEZ2"/>
<dbReference type="Reactome" id="R-HSA-162588">
    <property type="pathway name" value="Budding and maturation of HIV virion"/>
</dbReference>
<dbReference type="Reactome" id="R-HSA-174490">
    <property type="pathway name" value="Membrane binding and targetting of GAG proteins"/>
</dbReference>
<dbReference type="Reactome" id="R-HSA-917729">
    <property type="pathway name" value="Endosomal Sorting Complex Required For Transport (ESCRT)"/>
</dbReference>
<dbReference type="Reactome" id="R-HSA-9610379">
    <property type="pathway name" value="HCMV Late Events"/>
</dbReference>
<dbReference type="Reactome" id="R-HSA-9615710">
    <property type="pathway name" value="Late endosomal microautophagy"/>
</dbReference>
<dbReference type="SignaLink" id="Q8NEZ2"/>
<dbReference type="BioGRID-ORCS" id="137492">
    <property type="hits" value="390 hits in 1164 CRISPR screens"/>
</dbReference>
<dbReference type="ChiTaRS" id="VPS37A">
    <property type="organism name" value="human"/>
</dbReference>
<dbReference type="GeneWiki" id="VPS37A"/>
<dbReference type="GenomeRNAi" id="137492"/>
<dbReference type="Pharos" id="Q8NEZ2">
    <property type="development level" value="Tbio"/>
</dbReference>
<dbReference type="PRO" id="PR:Q8NEZ2"/>
<dbReference type="Proteomes" id="UP000005640">
    <property type="component" value="Chromosome 8"/>
</dbReference>
<dbReference type="RNAct" id="Q8NEZ2">
    <property type="molecule type" value="protein"/>
</dbReference>
<dbReference type="Bgee" id="ENSG00000155975">
    <property type="expression patterns" value="Expressed in islet of Langerhans and 181 other cell types or tissues"/>
</dbReference>
<dbReference type="ExpressionAtlas" id="Q8NEZ2">
    <property type="expression patterns" value="baseline and differential"/>
</dbReference>
<dbReference type="GO" id="GO:0005813">
    <property type="term" value="C:centrosome"/>
    <property type="evidence" value="ECO:0000314"/>
    <property type="project" value="HPA"/>
</dbReference>
<dbReference type="GO" id="GO:0005829">
    <property type="term" value="C:cytosol"/>
    <property type="evidence" value="ECO:0000314"/>
    <property type="project" value="HPA"/>
</dbReference>
<dbReference type="GO" id="GO:0010008">
    <property type="term" value="C:endosome membrane"/>
    <property type="evidence" value="ECO:0000304"/>
    <property type="project" value="Reactome"/>
</dbReference>
<dbReference type="GO" id="GO:0000813">
    <property type="term" value="C:ESCRT I complex"/>
    <property type="evidence" value="ECO:0000314"/>
    <property type="project" value="UniProtKB"/>
</dbReference>
<dbReference type="GO" id="GO:0043231">
    <property type="term" value="C:intracellular membrane-bounded organelle"/>
    <property type="evidence" value="ECO:0000314"/>
    <property type="project" value="HPA"/>
</dbReference>
<dbReference type="GO" id="GO:0031902">
    <property type="term" value="C:late endosome membrane"/>
    <property type="evidence" value="ECO:0007669"/>
    <property type="project" value="UniProtKB-SubCell"/>
</dbReference>
<dbReference type="GO" id="GO:0005654">
    <property type="term" value="C:nucleoplasm"/>
    <property type="evidence" value="ECO:0000314"/>
    <property type="project" value="HPA"/>
</dbReference>
<dbReference type="GO" id="GO:0016236">
    <property type="term" value="P:macroautophagy"/>
    <property type="evidence" value="ECO:0000304"/>
    <property type="project" value="ParkinsonsUK-UCL"/>
</dbReference>
<dbReference type="GO" id="GO:0090148">
    <property type="term" value="P:membrane fission"/>
    <property type="evidence" value="ECO:0000303"/>
    <property type="project" value="ComplexPortal"/>
</dbReference>
<dbReference type="GO" id="GO:0036258">
    <property type="term" value="P:multivesicular body assembly"/>
    <property type="evidence" value="ECO:0000304"/>
    <property type="project" value="ParkinsonsUK-UCL"/>
</dbReference>
<dbReference type="GO" id="GO:0006612">
    <property type="term" value="P:protein targeting to membrane"/>
    <property type="evidence" value="ECO:0000318"/>
    <property type="project" value="GO_Central"/>
</dbReference>
<dbReference type="GO" id="GO:0006623">
    <property type="term" value="P:protein targeting to vacuole"/>
    <property type="evidence" value="ECO:0000318"/>
    <property type="project" value="GO_Central"/>
</dbReference>
<dbReference type="GO" id="GO:0043328">
    <property type="term" value="P:protein transport to vacuole involved in ubiquitin-dependent protein catabolic process via the multivesicular body sorting pathway"/>
    <property type="evidence" value="ECO:0000303"/>
    <property type="project" value="ComplexPortal"/>
</dbReference>
<dbReference type="GO" id="GO:0043162">
    <property type="term" value="P:ubiquitin-dependent protein catabolic process via the multivesicular body sorting pathway"/>
    <property type="evidence" value="ECO:0000315"/>
    <property type="project" value="UniProtKB"/>
</dbReference>
<dbReference type="GO" id="GO:0039702">
    <property type="term" value="P:viral budding via host ESCRT complex"/>
    <property type="evidence" value="ECO:0000304"/>
    <property type="project" value="ParkinsonsUK-UCL"/>
</dbReference>
<dbReference type="CDD" id="cd11685">
    <property type="entry name" value="UEV_TSG101-like"/>
    <property type="match status" value="1"/>
</dbReference>
<dbReference type="FunFam" id="1.10.287.660:FF:000002">
    <property type="entry name" value="Vacuolar protein sorting-associated protein 37A"/>
    <property type="match status" value="1"/>
</dbReference>
<dbReference type="FunFam" id="3.10.110.10:FF:000069">
    <property type="entry name" value="vacuolar protein sorting-associated protein 37A"/>
    <property type="match status" value="1"/>
</dbReference>
<dbReference type="Gene3D" id="1.10.287.660">
    <property type="entry name" value="Helix hairpin bin"/>
    <property type="match status" value="1"/>
</dbReference>
<dbReference type="Gene3D" id="3.10.110.10">
    <property type="entry name" value="Ubiquitin Conjugating Enzyme"/>
    <property type="match status" value="1"/>
</dbReference>
<dbReference type="InterPro" id="IPR037202">
    <property type="entry name" value="ESCRT_assembly_dom"/>
</dbReference>
<dbReference type="InterPro" id="IPR029012">
    <property type="entry name" value="Helix_hairpin_bin_sf"/>
</dbReference>
<dbReference type="InterPro" id="IPR009851">
    <property type="entry name" value="Mod_r"/>
</dbReference>
<dbReference type="InterPro" id="IPR016135">
    <property type="entry name" value="UBQ-conjugating_enzyme/RWD"/>
</dbReference>
<dbReference type="PANTHER" id="PTHR13678">
    <property type="entry name" value="VACUOLAR PROTEIN SORTING-ASSOCIATED PROTEIN 37"/>
    <property type="match status" value="1"/>
</dbReference>
<dbReference type="PANTHER" id="PTHR13678:SF20">
    <property type="entry name" value="VACUOLAR PROTEIN SORTING-ASSOCIATED PROTEIN 37A"/>
    <property type="match status" value="1"/>
</dbReference>
<dbReference type="Pfam" id="PF07200">
    <property type="entry name" value="Mod_r"/>
    <property type="match status" value="1"/>
</dbReference>
<dbReference type="SUPFAM" id="SSF140111">
    <property type="entry name" value="Endosomal sorting complex assembly domain"/>
    <property type="match status" value="1"/>
</dbReference>
<dbReference type="SUPFAM" id="SSF54495">
    <property type="entry name" value="UBC-like"/>
    <property type="match status" value="1"/>
</dbReference>
<dbReference type="PROSITE" id="PS51314">
    <property type="entry name" value="VPS37_C"/>
    <property type="match status" value="1"/>
</dbReference>
<gene>
    <name type="primary">VPS37A</name>
    <name type="synonym">HCRP1</name>
</gene>
<name>VP37A_HUMAN</name>